<keyword id="KW-0067">ATP-binding</keyword>
<keyword id="KW-0143">Chaperone</keyword>
<keyword id="KW-0963">Cytoplasm</keyword>
<keyword id="KW-0547">Nucleotide-binding</keyword>
<keyword id="KW-1185">Reference proteome</keyword>
<keyword id="KW-0346">Stress response</keyword>
<organism>
    <name type="scientific">Buchnera aphidicola subsp. Baizongia pistaciae (strain Bp)</name>
    <dbReference type="NCBI Taxonomy" id="224915"/>
    <lineage>
        <taxon>Bacteria</taxon>
        <taxon>Pseudomonadati</taxon>
        <taxon>Pseudomonadota</taxon>
        <taxon>Gammaproteobacteria</taxon>
        <taxon>Enterobacterales</taxon>
        <taxon>Erwiniaceae</taxon>
        <taxon>Buchnera</taxon>
    </lineage>
</organism>
<proteinExistence type="inferred from homology"/>
<name>HTPG_BUCBP</name>
<sequence length="626" mass="73225">MTANKNQKKTYNFKSETKELLHLMIHSLYSNREIFFRELISNAADAIDKLKFNAISAPELYENDTNLYIRIFSNKNNNSLTISDNGIGMKYEDIINNLGTIAKSGTKEFIKTLNKNNKIKNDLIGQFGVGFYSSFIVSEKVIVKTRFAGLKENQGVIWTSDGKGTYEVNEINKKERGTEVTLYLTKDHYEFLETWKIQNTVSKYSDHISIPIELNTYDEKEKTYFWKQINQAEAIWTRPKSEITELQYKNFYKKIANDTNDPLTWTHNKVEGNQEYTILLFIPSKSAWDIWNRDNKHGLKLYVKRVYIMDDAEQFLPNYLRFVKGIIDSNDLPLNVSREILQDHKLVYNLKKSLTKKVLQVLHSLSQNVSKYEIFWKQFGLILKEGPAEDSENRTSISNLIRFSSLLNNTQKPTMSLENYVKNMKQNQEKIYFITADNYASAVSSPHLEFFKKKNIDVLILSDKIDEWMMNYLIEYNEKKFQSVSKDDKSIEKLVHEQNSQNETYQENMNDFLNRAKKTLSDKIKDIRFTHKLTNTPAMVITDSNEMSTQMAKLFSAAGQTVPTIKYILEINPNHLLIKKINNEKNEKKFKNWINFLFEQCLLAEKNTLDNPNKFIARINDLLINN</sequence>
<evidence type="ECO:0000255" key="1">
    <source>
        <dbReference type="HAMAP-Rule" id="MF_00505"/>
    </source>
</evidence>
<protein>
    <recommendedName>
        <fullName evidence="1">Chaperone protein HtpG</fullName>
    </recommendedName>
    <alternativeName>
        <fullName evidence="1">Heat shock protein HtpG</fullName>
    </alternativeName>
    <alternativeName>
        <fullName evidence="1">High temperature protein G</fullName>
    </alternativeName>
</protein>
<reference key="1">
    <citation type="journal article" date="2003" name="Proc. Natl. Acad. Sci. U.S.A.">
        <title>Reductive genome evolution in Buchnera aphidicola.</title>
        <authorList>
            <person name="van Ham R.C.H.J."/>
            <person name="Kamerbeek J."/>
            <person name="Palacios C."/>
            <person name="Rausell C."/>
            <person name="Abascal F."/>
            <person name="Bastolla U."/>
            <person name="Fernandez J.M."/>
            <person name="Jimenez L."/>
            <person name="Postigo M."/>
            <person name="Silva F.J."/>
            <person name="Tamames J."/>
            <person name="Viguera E."/>
            <person name="Latorre A."/>
            <person name="Valencia A."/>
            <person name="Moran F."/>
            <person name="Moya A."/>
        </authorList>
    </citation>
    <scope>NUCLEOTIDE SEQUENCE [LARGE SCALE GENOMIC DNA]</scope>
    <source>
        <strain>Bp</strain>
    </source>
</reference>
<accession>Q89A93</accession>
<gene>
    <name evidence="1" type="primary">htpG</name>
    <name type="ordered locus">bbp_427</name>
</gene>
<feature type="chain" id="PRO_0000062977" description="Chaperone protein HtpG">
    <location>
        <begin position="1"/>
        <end position="626"/>
    </location>
</feature>
<feature type="region of interest" description="A; substrate-binding" evidence="1">
    <location>
        <begin position="1"/>
        <end position="338"/>
    </location>
</feature>
<feature type="region of interest" description="B" evidence="1">
    <location>
        <begin position="339"/>
        <end position="553"/>
    </location>
</feature>
<feature type="region of interest" description="C" evidence="1">
    <location>
        <begin position="554"/>
        <end position="626"/>
    </location>
</feature>
<dbReference type="EMBL" id="AE016826">
    <property type="protein sequence ID" value="AAO27137.1"/>
    <property type="molecule type" value="Genomic_DNA"/>
</dbReference>
<dbReference type="RefSeq" id="WP_011091538.1">
    <property type="nucleotide sequence ID" value="NC_004545.1"/>
</dbReference>
<dbReference type="SMR" id="Q89A93"/>
<dbReference type="STRING" id="224915.bbp_427"/>
<dbReference type="KEGG" id="bab:bbp_427"/>
<dbReference type="eggNOG" id="COG0326">
    <property type="taxonomic scope" value="Bacteria"/>
</dbReference>
<dbReference type="HOGENOM" id="CLU_006684_3_0_6"/>
<dbReference type="OrthoDB" id="9802640at2"/>
<dbReference type="Proteomes" id="UP000000601">
    <property type="component" value="Chromosome"/>
</dbReference>
<dbReference type="GO" id="GO:0005737">
    <property type="term" value="C:cytoplasm"/>
    <property type="evidence" value="ECO:0007669"/>
    <property type="project" value="UniProtKB-SubCell"/>
</dbReference>
<dbReference type="GO" id="GO:0005524">
    <property type="term" value="F:ATP binding"/>
    <property type="evidence" value="ECO:0007669"/>
    <property type="project" value="UniProtKB-UniRule"/>
</dbReference>
<dbReference type="GO" id="GO:0016887">
    <property type="term" value="F:ATP hydrolysis activity"/>
    <property type="evidence" value="ECO:0007669"/>
    <property type="project" value="InterPro"/>
</dbReference>
<dbReference type="GO" id="GO:0140662">
    <property type="term" value="F:ATP-dependent protein folding chaperone"/>
    <property type="evidence" value="ECO:0007669"/>
    <property type="project" value="InterPro"/>
</dbReference>
<dbReference type="GO" id="GO:0051082">
    <property type="term" value="F:unfolded protein binding"/>
    <property type="evidence" value="ECO:0007669"/>
    <property type="project" value="UniProtKB-UniRule"/>
</dbReference>
<dbReference type="CDD" id="cd16927">
    <property type="entry name" value="HATPase_Hsp90-like"/>
    <property type="match status" value="1"/>
</dbReference>
<dbReference type="FunFam" id="3.30.230.80:FF:000002">
    <property type="entry name" value="Molecular chaperone HtpG"/>
    <property type="match status" value="1"/>
</dbReference>
<dbReference type="FunFam" id="3.30.565.10:FF:000009">
    <property type="entry name" value="Molecular chaperone HtpG"/>
    <property type="match status" value="1"/>
</dbReference>
<dbReference type="Gene3D" id="3.30.230.80">
    <property type="match status" value="1"/>
</dbReference>
<dbReference type="Gene3D" id="3.40.50.11260">
    <property type="match status" value="1"/>
</dbReference>
<dbReference type="Gene3D" id="1.20.120.790">
    <property type="entry name" value="Heat shock protein 90, C-terminal domain"/>
    <property type="match status" value="1"/>
</dbReference>
<dbReference type="Gene3D" id="3.30.565.10">
    <property type="entry name" value="Histidine kinase-like ATPase, C-terminal domain"/>
    <property type="match status" value="1"/>
</dbReference>
<dbReference type="HAMAP" id="MF_00505">
    <property type="entry name" value="HSP90"/>
    <property type="match status" value="1"/>
</dbReference>
<dbReference type="InterPro" id="IPR036890">
    <property type="entry name" value="HATPase_C_sf"/>
</dbReference>
<dbReference type="InterPro" id="IPR037196">
    <property type="entry name" value="HSP90_C"/>
</dbReference>
<dbReference type="InterPro" id="IPR001404">
    <property type="entry name" value="Hsp90_fam"/>
</dbReference>
<dbReference type="InterPro" id="IPR020575">
    <property type="entry name" value="Hsp90_N"/>
</dbReference>
<dbReference type="InterPro" id="IPR020568">
    <property type="entry name" value="Ribosomal_Su5_D2-typ_SF"/>
</dbReference>
<dbReference type="NCBIfam" id="NF003555">
    <property type="entry name" value="PRK05218.1"/>
    <property type="match status" value="1"/>
</dbReference>
<dbReference type="PANTHER" id="PTHR11528">
    <property type="entry name" value="HEAT SHOCK PROTEIN 90 FAMILY MEMBER"/>
    <property type="match status" value="1"/>
</dbReference>
<dbReference type="Pfam" id="PF13589">
    <property type="entry name" value="HATPase_c_3"/>
    <property type="match status" value="1"/>
</dbReference>
<dbReference type="Pfam" id="PF00183">
    <property type="entry name" value="HSP90"/>
    <property type="match status" value="1"/>
</dbReference>
<dbReference type="PIRSF" id="PIRSF002583">
    <property type="entry name" value="Hsp90"/>
    <property type="match status" value="1"/>
</dbReference>
<dbReference type="PRINTS" id="PR00775">
    <property type="entry name" value="HEATSHOCK90"/>
</dbReference>
<dbReference type="SUPFAM" id="SSF55874">
    <property type="entry name" value="ATPase domain of HSP90 chaperone/DNA topoisomerase II/histidine kinase"/>
    <property type="match status" value="1"/>
</dbReference>
<dbReference type="SUPFAM" id="SSF110942">
    <property type="entry name" value="HSP90 C-terminal domain"/>
    <property type="match status" value="1"/>
</dbReference>
<dbReference type="SUPFAM" id="SSF54211">
    <property type="entry name" value="Ribosomal protein S5 domain 2-like"/>
    <property type="match status" value="1"/>
</dbReference>
<comment type="function">
    <text evidence="1">Molecular chaperone. Has ATPase activity.</text>
</comment>
<comment type="subunit">
    <text evidence="1">Homodimer.</text>
</comment>
<comment type="subcellular location">
    <subcellularLocation>
        <location evidence="1">Cytoplasm</location>
    </subcellularLocation>
</comment>
<comment type="similarity">
    <text evidence="1">Belongs to the heat shock protein 90 family.</text>
</comment>